<evidence type="ECO:0000250" key="1">
    <source>
        <dbReference type="UniProtKB" id="Q13283"/>
    </source>
</evidence>
<evidence type="ECO:0000255" key="2">
    <source>
        <dbReference type="PROSITE-ProRule" id="PRU00137"/>
    </source>
</evidence>
<evidence type="ECO:0000255" key="3">
    <source>
        <dbReference type="PROSITE-ProRule" id="PRU00176"/>
    </source>
</evidence>
<evidence type="ECO:0000256" key="4">
    <source>
        <dbReference type="SAM" id="MobiDB-lite"/>
    </source>
</evidence>
<evidence type="ECO:0000269" key="5">
    <source>
    </source>
</evidence>
<evidence type="ECO:0000269" key="6">
    <source>
    </source>
</evidence>
<evidence type="ECO:0000269" key="7">
    <source>
    </source>
</evidence>
<evidence type="ECO:0000269" key="8">
    <source>
    </source>
</evidence>
<evidence type="ECO:0007744" key="9">
    <source>
    </source>
</evidence>
<evidence type="ECO:0007744" key="10">
    <source>
    </source>
</evidence>
<evidence type="ECO:0007744" key="11">
    <source>
    </source>
</evidence>
<evidence type="ECO:0007744" key="12">
    <source>
    </source>
</evidence>
<evidence type="ECO:0007744" key="13">
    <source>
    </source>
</evidence>
<sequence length="465" mass="51829">MVMEKPSPLLVGREFVRQYYTLLNQAPDMLHRFYGKNSSYAHGGLDSNGKPADAVYGQKEIHRKVMSQNFTNCHTKIRHVDAHATLNDGVVVQVMGLLSNNNQALRRFMQTFVLAPEGSVANKFYVHNDIFRYQDEVFGGFVTEPQEESEEEVEEPEERQQTPEVVPDDSGTFYDQTVSNDLEEHLEEPVVEPEPEPEPEPEPEPVSDIQEDKPEAALEEAAPDDVQKSTSPAPADVAPAQEDLRTFSWASVTSKNLPPSGAVPVTGTPPHVVKVPASQPRPESKPDSQIPPQRPQRDQRVREQRINIPPQRGPRPIREAGEPGDVEPRRMVRHPDSHQLFIGNLPHEVDKSELKDFFQNFGNVVELRINSGGKLPNFGFVVFDDSEPVQKVLSNRPIMFRGAVRLNVEEKKTRAAREGDRRDNRLRGPGGPRGGPSGGMRGPPRGGMVQKPGFGVGRGITTPRQ</sequence>
<reference key="1">
    <citation type="submission" date="1997-03" db="EMBL/GenBank/DDBJ databases">
        <title>cDNA cloning of GAP SH3 binding protein from mouse brain.</title>
        <authorList>
            <person name="Saitoh H."/>
            <person name="Abe T.K."/>
            <person name="Masuko M."/>
            <person name="Tanaka H."/>
            <person name="Watanabe Y.G."/>
            <person name="Odani S."/>
            <person name="Kuwano R."/>
        </authorList>
    </citation>
    <scope>NUCLEOTIDE SEQUENCE [MRNA]</scope>
    <source>
        <tissue>Brain</tissue>
    </source>
</reference>
<reference key="2">
    <citation type="journal article" date="2004" name="Genome Res.">
        <title>The status, quality, and expansion of the NIH full-length cDNA project: the Mammalian Gene Collection (MGC).</title>
        <authorList>
            <consortium name="The MGC Project Team"/>
        </authorList>
    </citation>
    <scope>NUCLEOTIDE SEQUENCE [LARGE SCALE MRNA]</scope>
    <source>
        <strain>Czech II</strain>
        <tissue>Mammary gland</tissue>
    </source>
</reference>
<reference key="3">
    <citation type="submission" date="2009-01" db="UniProtKB">
        <authorList>
            <person name="Lubec G."/>
            <person name="Yang J.W."/>
            <person name="Zigmond M."/>
            <person name="Sunyer B."/>
            <person name="Chen W.-Q."/>
        </authorList>
    </citation>
    <scope>PROTEIN SEQUENCE OF 124-132; 334-351 AND 375-391</scope>
    <scope>IDENTIFICATION BY MASS SPECTROMETRY</scope>
    <source>
        <strain>OF1</strain>
        <tissue>Brain</tissue>
        <tissue>Hippocampus</tissue>
    </source>
</reference>
<reference key="4">
    <citation type="journal article" date="1996" name="Mol. Cell. Biol.">
        <title>A Ras-GTPase-activating protein SH3-domain-binding protein.</title>
        <authorList>
            <person name="Parker F."/>
            <person name="Maurier F."/>
            <person name="Delumeau I."/>
            <person name="Duchesne M."/>
            <person name="Faucher D."/>
            <person name="Debussche L."/>
            <person name="Dugue A."/>
            <person name="Schweighoffer F."/>
            <person name="Tocque B."/>
        </authorList>
    </citation>
    <scope>INTERACTION WITH RASA1</scope>
    <scope>SUBCELLULAR LOCATION</scope>
</reference>
<reference key="5">
    <citation type="journal article" date="2001" name="Mol. Cell. Biol.">
        <title>RasGAP-associated endoribonuclease G3Bp: selective RNA degradation and phosphorylation-dependent localization.</title>
        <authorList>
            <person name="Tourriere H."/>
            <person name="Gallouzi I.-E."/>
            <person name="Chebli K."/>
            <person name="Capony J.-P."/>
            <person name="Mouaikel J."/>
            <person name="van der Geer P."/>
            <person name="Tazi J."/>
        </authorList>
    </citation>
    <scope>ENDORIBONUCLEASE ACTIVITY</scope>
    <scope>PHOSPHORYLATION AT SER-149 AND SER-231</scope>
</reference>
<reference key="6">
    <citation type="journal article" date="2004" name="J. Neurochem.">
        <title>The insulin-like growth factor mRNA binding-protein IMP-1 and the Ras-regulatory protein G3BP associate with tau mRNA and HuD protein in differentiated P19 neuronal cells.</title>
        <authorList>
            <person name="Atlas R."/>
            <person name="Behar L."/>
            <person name="Elliott E."/>
            <person name="Ginzburg I."/>
        </authorList>
    </citation>
    <scope>IDENTIFICATION IN A MRNP COMPLEX WITH IGF2BP1 AND ELAVL4</scope>
    <scope>SUBCELLULAR LOCATION</scope>
</reference>
<reference key="7">
    <citation type="journal article" date="2004" name="Mol. Cell. Proteomics">
        <title>Phosphoproteomic analysis of the developing mouse brain.</title>
        <authorList>
            <person name="Ballif B.A."/>
            <person name="Villen J."/>
            <person name="Beausoleil S.A."/>
            <person name="Schwartz D."/>
            <person name="Gygi S.P."/>
        </authorList>
    </citation>
    <scope>PHOSPHORYLATION [LARGE SCALE ANALYSIS] AT SER-149</scope>
    <scope>IDENTIFICATION BY MASS SPECTROMETRY [LARGE SCALE ANALYSIS]</scope>
    <source>
        <tissue>Embryonic brain</tissue>
    </source>
</reference>
<reference key="8">
    <citation type="journal article" date="2007" name="Proc. Natl. Acad. Sci. U.S.A.">
        <title>Large-scale phosphorylation analysis of mouse liver.</title>
        <authorList>
            <person name="Villen J."/>
            <person name="Beausoleil S.A."/>
            <person name="Gerber S.A."/>
            <person name="Gygi S.P."/>
        </authorList>
    </citation>
    <scope>IDENTIFICATION BY MASS SPECTROMETRY [LARGE SCALE ANALYSIS]</scope>
    <source>
        <tissue>Liver</tissue>
    </source>
</reference>
<reference key="9">
    <citation type="journal article" date="2009" name="Immunity">
        <title>The phagosomal proteome in interferon-gamma-activated macrophages.</title>
        <authorList>
            <person name="Trost M."/>
            <person name="English L."/>
            <person name="Lemieux S."/>
            <person name="Courcelles M."/>
            <person name="Desjardins M."/>
            <person name="Thibault P."/>
        </authorList>
    </citation>
    <scope>PHOSPHORYLATION [LARGE SCALE ANALYSIS] AT SER-149</scope>
    <scope>IDENTIFICATION BY MASS SPECTROMETRY [LARGE SCALE ANALYSIS]</scope>
</reference>
<reference key="10">
    <citation type="journal article" date="2009" name="Mol. Cell. Proteomics">
        <title>Large scale localization of protein phosphorylation by use of electron capture dissociation mass spectrometry.</title>
        <authorList>
            <person name="Sweet S.M."/>
            <person name="Bailey C.M."/>
            <person name="Cunningham D.L."/>
            <person name="Heath J.K."/>
            <person name="Cooper H.J."/>
        </authorList>
    </citation>
    <scope>PHOSPHORYLATION [LARGE SCALE ANALYSIS] AT SER-231</scope>
    <scope>IDENTIFICATION BY MASS SPECTROMETRY [LARGE SCALE ANALYSIS]</scope>
    <source>
        <tissue>Embryonic fibroblast</tissue>
    </source>
</reference>
<reference key="11">
    <citation type="journal article" date="2010" name="Cell">
        <title>A tissue-specific atlas of mouse protein phosphorylation and expression.</title>
        <authorList>
            <person name="Huttlin E.L."/>
            <person name="Jedrychowski M.P."/>
            <person name="Elias J.E."/>
            <person name="Goswami T."/>
            <person name="Rad R."/>
            <person name="Beausoleil S.A."/>
            <person name="Villen J."/>
            <person name="Haas W."/>
            <person name="Sowa M.E."/>
            <person name="Gygi S.P."/>
        </authorList>
    </citation>
    <scope>PHOSPHORYLATION [LARGE SCALE ANALYSIS] AT SER-149 AND SER-231</scope>
    <scope>IDENTIFICATION BY MASS SPECTROMETRY [LARGE SCALE ANALYSIS]</scope>
    <source>
        <tissue>Brain</tissue>
        <tissue>Brown adipose tissue</tissue>
        <tissue>Heart</tissue>
        <tissue>Kidney</tissue>
        <tissue>Liver</tissue>
        <tissue>Lung</tissue>
        <tissue>Pancreas</tissue>
        <tissue>Spleen</tissue>
        <tissue>Testis</tissue>
    </source>
</reference>
<reference key="12">
    <citation type="journal article" date="2014" name="Mol. Cell. Proteomics">
        <title>Immunoaffinity enrichment and mass spectrometry analysis of protein methylation.</title>
        <authorList>
            <person name="Guo A."/>
            <person name="Gu H."/>
            <person name="Zhou J."/>
            <person name="Mulhern D."/>
            <person name="Wang Y."/>
            <person name="Lee K.A."/>
            <person name="Yang V."/>
            <person name="Aguiar M."/>
            <person name="Kornhauser J."/>
            <person name="Jia X."/>
            <person name="Ren J."/>
            <person name="Beausoleil S.A."/>
            <person name="Silva J.C."/>
            <person name="Vemulapalli V."/>
            <person name="Bedford M.T."/>
            <person name="Comb M.J."/>
        </authorList>
    </citation>
    <scope>METHYLATION [LARGE SCALE ANALYSIS] AT ARG-433; ARG-445 AND ARG-458</scope>
    <scope>IDENTIFICATION BY MASS SPECTROMETRY [LARGE SCALE ANALYSIS]</scope>
    <source>
        <tissue>Brain</tissue>
        <tissue>Embryo</tissue>
    </source>
</reference>
<reference key="13">
    <citation type="journal article" date="2019" name="Nat. Immunol.">
        <title>G3BP1 promotes DNA binding and activation of cGAS.</title>
        <authorList>
            <person name="Liu Z.S."/>
            <person name="Cai H."/>
            <person name="Xue W."/>
            <person name="Wang M."/>
            <person name="Xia T."/>
            <person name="Li W.J."/>
            <person name="Xing J.Q."/>
            <person name="Zhao M."/>
            <person name="Huang Y.J."/>
            <person name="Chen S."/>
            <person name="Wu S.M."/>
            <person name="Wang X."/>
            <person name="Liu X."/>
            <person name="Pang X."/>
            <person name="Zhang Z.Y."/>
            <person name="Li T."/>
            <person name="Dai J."/>
            <person name="Dong F."/>
            <person name="Xia Q."/>
            <person name="Li A.L."/>
            <person name="Zhou T."/>
            <person name="Liu Z.G."/>
            <person name="Zhang X.M."/>
            <person name="Li T."/>
        </authorList>
    </citation>
    <scope>TISSUE SPECIFICITY</scope>
</reference>
<dbReference type="EC" id="3.6.4.12" evidence="1"/>
<dbReference type="EC" id="3.6.4.13" evidence="1"/>
<dbReference type="EMBL" id="AB001927">
    <property type="protein sequence ID" value="BAA19469.1"/>
    <property type="molecule type" value="mRNA"/>
</dbReference>
<dbReference type="EMBL" id="BC021156">
    <property type="protein sequence ID" value="AAH21156.1"/>
    <property type="molecule type" value="mRNA"/>
</dbReference>
<dbReference type="CCDS" id="CCDS24714.1"/>
<dbReference type="RefSeq" id="NP_038744.1">
    <property type="nucleotide sequence ID" value="NM_013716.3"/>
</dbReference>
<dbReference type="SMR" id="P97855"/>
<dbReference type="BioGRID" id="205102">
    <property type="interactions" value="47"/>
</dbReference>
<dbReference type="FunCoup" id="P97855">
    <property type="interactions" value="3991"/>
</dbReference>
<dbReference type="IntAct" id="P97855">
    <property type="interactions" value="7"/>
</dbReference>
<dbReference type="STRING" id="10090.ENSMUSP00000018727"/>
<dbReference type="GlyGen" id="P97855">
    <property type="glycosylation" value="6 sites, 2 N-linked glycans (2 sites), 1 O-linked glycan (4 sites)"/>
</dbReference>
<dbReference type="iPTMnet" id="P97855"/>
<dbReference type="MetOSite" id="P97855"/>
<dbReference type="PhosphoSitePlus" id="P97855"/>
<dbReference type="SwissPalm" id="P97855"/>
<dbReference type="jPOST" id="P97855"/>
<dbReference type="PaxDb" id="10090-ENSMUSP00000018727"/>
<dbReference type="PeptideAtlas" id="P97855"/>
<dbReference type="ProteomicsDB" id="273017"/>
<dbReference type="Pumba" id="P97855"/>
<dbReference type="Antibodypedia" id="1315">
    <property type="antibodies" value="574 antibodies from 37 providers"/>
</dbReference>
<dbReference type="DNASU" id="27041"/>
<dbReference type="Ensembl" id="ENSMUST00000018727.4">
    <property type="protein sequence ID" value="ENSMUSP00000018727.4"/>
    <property type="gene ID" value="ENSMUSG00000018583.6"/>
</dbReference>
<dbReference type="GeneID" id="27041"/>
<dbReference type="KEGG" id="mmu:27041"/>
<dbReference type="UCSC" id="uc007izl.1">
    <property type="organism name" value="mouse"/>
</dbReference>
<dbReference type="AGR" id="MGI:1351465"/>
<dbReference type="CTD" id="10146"/>
<dbReference type="MGI" id="MGI:1351465">
    <property type="gene designation" value="G3bp1"/>
</dbReference>
<dbReference type="VEuPathDB" id="HostDB:ENSMUSG00000018583"/>
<dbReference type="eggNOG" id="KOG0116">
    <property type="taxonomic scope" value="Eukaryota"/>
</dbReference>
<dbReference type="GeneTree" id="ENSGT00390000011365"/>
<dbReference type="HOGENOM" id="CLU_022209_0_2_1"/>
<dbReference type="InParanoid" id="P97855"/>
<dbReference type="OMA" id="RCKGPQG"/>
<dbReference type="OrthoDB" id="339151at2759"/>
<dbReference type="PhylomeDB" id="P97855"/>
<dbReference type="TreeFam" id="TF325464"/>
<dbReference type="BioGRID-ORCS" id="27041">
    <property type="hits" value="8 hits in 83 CRISPR screens"/>
</dbReference>
<dbReference type="ChiTaRS" id="G3bp1">
    <property type="organism name" value="mouse"/>
</dbReference>
<dbReference type="PRO" id="PR:P97855"/>
<dbReference type="Proteomes" id="UP000000589">
    <property type="component" value="Chromosome 11"/>
</dbReference>
<dbReference type="RNAct" id="P97855">
    <property type="molecule type" value="protein"/>
</dbReference>
<dbReference type="Bgee" id="ENSMUSG00000018583">
    <property type="expression patterns" value="Expressed in ileal epithelium and 283 other cell types or tissues"/>
</dbReference>
<dbReference type="GO" id="GO:0010494">
    <property type="term" value="C:cytoplasmic stress granule"/>
    <property type="evidence" value="ECO:0000314"/>
    <property type="project" value="ARUK-UCL"/>
</dbReference>
<dbReference type="GO" id="GO:0005829">
    <property type="term" value="C:cytosol"/>
    <property type="evidence" value="ECO:0007669"/>
    <property type="project" value="UniProtKB-SubCell"/>
</dbReference>
<dbReference type="GO" id="GO:0005634">
    <property type="term" value="C:nucleus"/>
    <property type="evidence" value="ECO:0007669"/>
    <property type="project" value="UniProtKB-SubCell"/>
</dbReference>
<dbReference type="GO" id="GO:0043204">
    <property type="term" value="C:perikaryon"/>
    <property type="evidence" value="ECO:0007669"/>
    <property type="project" value="UniProtKB-SubCell"/>
</dbReference>
<dbReference type="GO" id="GO:0005524">
    <property type="term" value="F:ATP binding"/>
    <property type="evidence" value="ECO:0007669"/>
    <property type="project" value="UniProtKB-KW"/>
</dbReference>
<dbReference type="GO" id="GO:0016887">
    <property type="term" value="F:ATP hydrolysis activity"/>
    <property type="evidence" value="ECO:0007669"/>
    <property type="project" value="RHEA"/>
</dbReference>
<dbReference type="GO" id="GO:0003677">
    <property type="term" value="F:DNA binding"/>
    <property type="evidence" value="ECO:0007669"/>
    <property type="project" value="UniProtKB-KW"/>
</dbReference>
<dbReference type="GO" id="GO:0003678">
    <property type="term" value="F:DNA helicase activity"/>
    <property type="evidence" value="ECO:0007669"/>
    <property type="project" value="Ensembl"/>
</dbReference>
<dbReference type="GO" id="GO:0033677">
    <property type="term" value="F:DNA/RNA helicase activity"/>
    <property type="evidence" value="ECO:0007669"/>
    <property type="project" value="Ensembl"/>
</dbReference>
<dbReference type="GO" id="GO:0004519">
    <property type="term" value="F:endonuclease activity"/>
    <property type="evidence" value="ECO:0007669"/>
    <property type="project" value="UniProtKB-KW"/>
</dbReference>
<dbReference type="GO" id="GO:0140693">
    <property type="term" value="F:molecular condensate scaffold activity"/>
    <property type="evidence" value="ECO:0000250"/>
    <property type="project" value="UniProtKB"/>
</dbReference>
<dbReference type="GO" id="GO:0003729">
    <property type="term" value="F:mRNA binding"/>
    <property type="evidence" value="ECO:0000314"/>
    <property type="project" value="MGI"/>
</dbReference>
<dbReference type="GO" id="GO:0043024">
    <property type="term" value="F:ribosomal small subunit binding"/>
    <property type="evidence" value="ECO:0000250"/>
    <property type="project" value="UniProtKB"/>
</dbReference>
<dbReference type="GO" id="GO:0003724">
    <property type="term" value="F:RNA helicase activity"/>
    <property type="evidence" value="ECO:0007669"/>
    <property type="project" value="UniProtKB-EC"/>
</dbReference>
<dbReference type="GO" id="GO:0051607">
    <property type="term" value="P:defense response to virus"/>
    <property type="evidence" value="ECO:0007669"/>
    <property type="project" value="Ensembl"/>
</dbReference>
<dbReference type="GO" id="GO:0045087">
    <property type="term" value="P:innate immune response"/>
    <property type="evidence" value="ECO:0007669"/>
    <property type="project" value="UniProtKB-KW"/>
</dbReference>
<dbReference type="GO" id="GO:0090090">
    <property type="term" value="P:negative regulation of canonical Wnt signaling pathway"/>
    <property type="evidence" value="ECO:0000315"/>
    <property type="project" value="MGI"/>
</dbReference>
<dbReference type="GO" id="GO:0032481">
    <property type="term" value="P:positive regulation of type I interferon production"/>
    <property type="evidence" value="ECO:0007669"/>
    <property type="project" value="Ensembl"/>
</dbReference>
<dbReference type="GO" id="GO:0034063">
    <property type="term" value="P:stress granule assembly"/>
    <property type="evidence" value="ECO:0000250"/>
    <property type="project" value="UniProtKB"/>
</dbReference>
<dbReference type="CDD" id="cd00780">
    <property type="entry name" value="NTF2"/>
    <property type="match status" value="1"/>
</dbReference>
<dbReference type="CDD" id="cd12463">
    <property type="entry name" value="RRM_G3BP1"/>
    <property type="match status" value="1"/>
</dbReference>
<dbReference type="FunFam" id="3.30.70.330:FF:000266">
    <property type="entry name" value="Ras GTPase-activating protein-binding protein 1"/>
    <property type="match status" value="1"/>
</dbReference>
<dbReference type="FunFam" id="3.10.450.50:FF:000002">
    <property type="entry name" value="Ras GTPase-activating protein-binding protein 2 isoform 1"/>
    <property type="match status" value="1"/>
</dbReference>
<dbReference type="Gene3D" id="3.10.450.50">
    <property type="match status" value="1"/>
</dbReference>
<dbReference type="Gene3D" id="3.30.70.330">
    <property type="match status" value="1"/>
</dbReference>
<dbReference type="InterPro" id="IPR034374">
    <property type="entry name" value="G3BP1_RRM"/>
</dbReference>
<dbReference type="InterPro" id="IPR032710">
    <property type="entry name" value="NTF2-like_dom_sf"/>
</dbReference>
<dbReference type="InterPro" id="IPR002075">
    <property type="entry name" value="NTF2_dom"/>
</dbReference>
<dbReference type="InterPro" id="IPR018222">
    <property type="entry name" value="Nuclear_transport_factor_2_euk"/>
</dbReference>
<dbReference type="InterPro" id="IPR012677">
    <property type="entry name" value="Nucleotide-bd_a/b_plait_sf"/>
</dbReference>
<dbReference type="InterPro" id="IPR039539">
    <property type="entry name" value="Ras_GTPase_bind_prot"/>
</dbReference>
<dbReference type="InterPro" id="IPR035979">
    <property type="entry name" value="RBD_domain_sf"/>
</dbReference>
<dbReference type="InterPro" id="IPR000504">
    <property type="entry name" value="RRM_dom"/>
</dbReference>
<dbReference type="PANTHER" id="PTHR10693">
    <property type="entry name" value="RAS GTPASE-ACTIVATING PROTEIN-BINDING PROTEIN"/>
    <property type="match status" value="1"/>
</dbReference>
<dbReference type="PANTHER" id="PTHR10693:SF21">
    <property type="entry name" value="RAS GTPASE-ACTIVATING PROTEIN-BINDING PROTEIN 1"/>
    <property type="match status" value="1"/>
</dbReference>
<dbReference type="Pfam" id="PF02136">
    <property type="entry name" value="NTF2"/>
    <property type="match status" value="1"/>
</dbReference>
<dbReference type="Pfam" id="PF00076">
    <property type="entry name" value="RRM_1"/>
    <property type="match status" value="1"/>
</dbReference>
<dbReference type="SMART" id="SM00360">
    <property type="entry name" value="RRM"/>
    <property type="match status" value="1"/>
</dbReference>
<dbReference type="SUPFAM" id="SSF54427">
    <property type="entry name" value="NTF2-like"/>
    <property type="match status" value="1"/>
</dbReference>
<dbReference type="SUPFAM" id="SSF54928">
    <property type="entry name" value="RNA-binding domain, RBD"/>
    <property type="match status" value="1"/>
</dbReference>
<dbReference type="PROSITE" id="PS50177">
    <property type="entry name" value="NTF2_DOMAIN"/>
    <property type="match status" value="1"/>
</dbReference>
<dbReference type="PROSITE" id="PS50102">
    <property type="entry name" value="RRM"/>
    <property type="match status" value="1"/>
</dbReference>
<comment type="function">
    <text evidence="1 5">Protein involved in various processes, such as stress granule formation and innate immunity (By similarity). Plays an essential role in stress granule formation (By similarity). Stress granules are membraneless compartments that store mRNAs and proteins, such as stalled translation pre-initiation complexes, in response to stress (By similarity). Promotes formation of stress granules phase-separated membraneless compartment by undergoing liquid-liquid phase separation (LLPS) upon unfolded RNA-binding: functions as a molecular switch that triggers RNA-dependent LLPS in response to a rise in intracellular free RNA concentrations (By similarity). Also acts as an ATP- and magnesium-dependent helicase: unwinds DNA/DNA, RNA/DNA, and RNA/RNA substrates with comparable efficiency (By similarity). Acts unidirectionally by moving in the 5' to 3' direction along the bound single-stranded DNA (By similarity). Unwinds preferentially partial DNA and RNA duplexes having a 17 bp annealed portion and either a hanging 3' tail or hanging tails at both 5'- and 3'-ends (By similarity). Plays an essential role in innate immunity by promoting CGAS and RIGI activity (By similarity). Participates in the DNA-triggered cGAS/STING pathway by promoting the DNA binding and activation of CGAS (By similarity). Triggers the condensation of cGAS, a process probably linked to the formation of membrane-less organelles. Also enhances RIGI-induced type I interferon production probably by helping RIGI at sensing pathogenic RNA (By similarity). May also act as a phosphorylation-dependent sequence-specific endoribonuclease in vitro: Cleaves exclusively between cytosine and adenine and cleaves MYC mRNA preferentially at the 3'-UTR (PubMed:11604510).</text>
</comment>
<comment type="catalytic activity">
    <reaction evidence="1">
        <text>ATP + H2O = ADP + phosphate + H(+)</text>
        <dbReference type="Rhea" id="RHEA:13065"/>
        <dbReference type="ChEBI" id="CHEBI:15377"/>
        <dbReference type="ChEBI" id="CHEBI:15378"/>
        <dbReference type="ChEBI" id="CHEBI:30616"/>
        <dbReference type="ChEBI" id="CHEBI:43474"/>
        <dbReference type="ChEBI" id="CHEBI:456216"/>
        <dbReference type="EC" id="3.6.4.12"/>
    </reaction>
</comment>
<comment type="catalytic activity">
    <reaction evidence="1">
        <text>ATP + H2O = ADP + phosphate + H(+)</text>
        <dbReference type="Rhea" id="RHEA:13065"/>
        <dbReference type="ChEBI" id="CHEBI:15377"/>
        <dbReference type="ChEBI" id="CHEBI:15378"/>
        <dbReference type="ChEBI" id="CHEBI:30616"/>
        <dbReference type="ChEBI" id="CHEBI:43474"/>
        <dbReference type="ChEBI" id="CHEBI:456216"/>
        <dbReference type="EC" id="3.6.4.13"/>
    </reaction>
</comment>
<comment type="cofactor">
    <cofactor evidence="1">
        <name>Mg(2+)</name>
        <dbReference type="ChEBI" id="CHEBI:18420"/>
    </cofactor>
    <text evidence="1">Mg(2+) is required for helicase activity.</text>
</comment>
<comment type="activity regulation">
    <text evidence="1">Under physiological conditions, G3BP1 adopts a compact state that is stabilized by intramolecular interactions between the RG-rich and the acidic regions that inhibit phase separation. Upon stress, polysomes disassemble and mRNAs are released in an unfolded protein-free state. Binding of unfolded mRNA to G3BP1 outcompetes the intramolecular interactions and RNA-bound G3BP1 adopts an expanded conformation in which the RG-rich region becomes exposed to engage in protein-protein and protein-RNA interactions, allowing physical cross-linking of RNA molecules to form protein-RNA condensates, leading to liquid-liquid phase separation (LLPS).</text>
</comment>
<comment type="subunit">
    <text evidence="1 6 8">Homodimer and oligomer (By similarity). Component of a TAU mRNP complex, at least composed of IGF2BP1, ELAVL4 and G3BP1 (PubMed:15086518). Binds to the SH3 domain of Ras GTPase-activating protein (RASA1) in proliferating cells (PubMed:8649363). No interaction in quiescent cells (PubMed:8649363). Interacts (via NTF2 domain) with USP10; inhibiting stress granule formation by lowering G3BP1 valence (By similarity). Interacts (via NTF2 domain) with CAPRIN1; promoting stress granule formation by lowering the saturation-concentration of G3BP1 (By similarity). Interacts (via NTF2 domain) with UBAP2L; promoting stress granule formation (By similarity). Associates (via RG-rich region) with 40S ribosome subunits (By similarity). Interacts with RPTOR and SPAG5; this complex is increased by oxidative stress (By similarity). Interacts with ATXN2L (By similarity). Interacts with STYXL1 (By similarity). Interacts with CGAS (via N-terminus); this interaction promotes the DNA-binding and activation of CGAS (By similarity). Interacts (via C-terminus) with RIGI (By similarity). Interacts with PABPC1 (By similarity). Interacts with QKI (isoforms QKI6 and QKI7); directing N(7)-methylguanine-containing mRNAs to stress granules (By similarity).</text>
</comment>
<comment type="subcellular location">
    <subcellularLocation>
        <location evidence="6 8">Cytoplasm</location>
        <location evidence="6 8">Cytosol</location>
    </subcellularLocation>
    <subcellularLocation>
        <location evidence="6">Perikaryon</location>
    </subcellularLocation>
    <subcellularLocation>
        <location evidence="1">Cytoplasm</location>
        <location evidence="1">Stress granule</location>
    </subcellularLocation>
    <subcellularLocation>
        <location evidence="1">Nucleus</location>
    </subcellularLocation>
    <text evidence="1">Cytoplasmic in proliferating cells, can be recruited to the plasma membrane in exponentially growing cells. Cytosolic and partially nuclear in resting cells. Recruited to stress granules in response to arsenite treatment. The unphosphorylated form is recruited to stress granules. HRAS signaling contributes to this process by regulating G3BP dephosphorylation.</text>
</comment>
<comment type="tissue specificity">
    <text evidence="7">Ubiquitous.</text>
</comment>
<comment type="domain">
    <text evidence="1">Can mediate both protein-protein and protein-RNA interactions via the NTF2 domain and RNA-binding domain RRM; protein-protein and protein-RNA interactions are essential for undergoing liquid-liquid phase separation (LLPS).</text>
</comment>
<comment type="domain">
    <text evidence="1">The acidic disordered region acts as a negative regulator of phase separation.</text>
</comment>
<comment type="domain">
    <text evidence="1">The NTF2 domain mediates interaction with CAPRIN1 and USP10 regulators, thereby regulating assembly of stress granules.</text>
</comment>
<comment type="PTM">
    <text evidence="1">Phosphorylation of the acidic disordered region regulates stress granule assembly. RASA1-dependent phosphorylation of Ser-149 induces a conformational change that prevents self-association. Dephosphorylation after HRAS activation is required for stress granule assembly. Ser-149 phosphorylation induces partial nuclear localization.</text>
</comment>
<comment type="PTM">
    <text evidence="1">Arg-435 is dimethylated, probably to asymmetric dimethylarginine.</text>
</comment>
<comment type="PTM">
    <text evidence="1">Ubiquitinated by TRIM21 via 'Lys-63'-linked polyubiquitination in the NTF2 domain in response to heat shock, leading to stress granule disassembly: ubiquitination promotes interaction with the FAF2 adapter, followed by interaction with VCP, which extracts G3BP1 from stress granules, leading to stress granule disassembly. In case of prolonged stress, ubiquitination by TRIM21 leads to autophagy-dependent degradation of G3BP1 via recruitment of ubiquitinated G3BP1 by SQSTM1 and/or CALCOCO2 to autophagosomes.</text>
</comment>
<organism>
    <name type="scientific">Mus musculus</name>
    <name type="common">Mouse</name>
    <dbReference type="NCBI Taxonomy" id="10090"/>
    <lineage>
        <taxon>Eukaryota</taxon>
        <taxon>Metazoa</taxon>
        <taxon>Chordata</taxon>
        <taxon>Craniata</taxon>
        <taxon>Vertebrata</taxon>
        <taxon>Euteleostomi</taxon>
        <taxon>Mammalia</taxon>
        <taxon>Eutheria</taxon>
        <taxon>Euarchontoglires</taxon>
        <taxon>Glires</taxon>
        <taxon>Rodentia</taxon>
        <taxon>Myomorpha</taxon>
        <taxon>Muroidea</taxon>
        <taxon>Muridae</taxon>
        <taxon>Murinae</taxon>
        <taxon>Mus</taxon>
        <taxon>Mus</taxon>
    </lineage>
</organism>
<gene>
    <name type="primary">G3bp1</name>
    <name type="synonym">G3bp</name>
</gene>
<keyword id="KW-0007">Acetylation</keyword>
<keyword id="KW-0067">ATP-binding</keyword>
<keyword id="KW-0963">Cytoplasm</keyword>
<keyword id="KW-0903">Direct protein sequencing</keyword>
<keyword id="KW-0238">DNA-binding</keyword>
<keyword id="KW-0255">Endonuclease</keyword>
<keyword id="KW-0347">Helicase</keyword>
<keyword id="KW-0378">Hydrolase</keyword>
<keyword id="KW-0391">Immunity</keyword>
<keyword id="KW-0399">Innate immunity</keyword>
<keyword id="KW-1017">Isopeptide bond</keyword>
<keyword id="KW-0488">Methylation</keyword>
<keyword id="KW-0540">Nuclease</keyword>
<keyword id="KW-0547">Nucleotide-binding</keyword>
<keyword id="KW-0539">Nucleus</keyword>
<keyword id="KW-0597">Phosphoprotein</keyword>
<keyword id="KW-1185">Reference proteome</keyword>
<keyword id="KW-0694">RNA-binding</keyword>
<keyword id="KW-0813">Transport</keyword>
<keyword id="KW-0832">Ubl conjugation</keyword>
<name>G3BP1_MOUSE</name>
<accession>P97855</accession>
<protein>
    <recommendedName>
        <fullName>Ras GTPase-activating protein-binding protein 1</fullName>
        <shortName>G3BP-1</shortName>
        <ecNumber evidence="1">3.6.4.12</ecNumber>
        <ecNumber evidence="1">3.6.4.13</ecNumber>
    </recommendedName>
    <alternativeName>
        <fullName>ATP-dependent DNA helicase VIII</fullName>
    </alternativeName>
    <alternativeName>
        <fullName>GAP SH3 domain-binding protein 1</fullName>
    </alternativeName>
    <alternativeName>
        <fullName>HDH-VIII</fullName>
    </alternativeName>
</protein>
<proteinExistence type="evidence at protein level"/>
<feature type="chain" id="PRO_0000194799" description="Ras GTPase-activating protein-binding protein 1">
    <location>
        <begin position="1"/>
        <end position="465"/>
    </location>
</feature>
<feature type="domain" description="NTF2" evidence="2">
    <location>
        <begin position="11"/>
        <end position="133"/>
    </location>
</feature>
<feature type="domain" description="RRM" evidence="3">
    <location>
        <begin position="338"/>
        <end position="413"/>
    </location>
</feature>
<feature type="region of interest" description="Acidic disordered region" evidence="1">
    <location>
        <begin position="142"/>
        <end position="224"/>
    </location>
</feature>
<feature type="region of interest" description="Disordered" evidence="4">
    <location>
        <begin position="144"/>
        <end position="330"/>
    </location>
</feature>
<feature type="region of interest" description="RG-rich region" evidence="1">
    <location>
        <begin position="408"/>
        <end position="464"/>
    </location>
</feature>
<feature type="region of interest" description="Disordered" evidence="4">
    <location>
        <begin position="411"/>
        <end position="465"/>
    </location>
</feature>
<feature type="compositionally biased region" description="Acidic residues" evidence="4">
    <location>
        <begin position="145"/>
        <end position="157"/>
    </location>
</feature>
<feature type="compositionally biased region" description="Acidic residues" evidence="4">
    <location>
        <begin position="184"/>
        <end position="205"/>
    </location>
</feature>
<feature type="compositionally biased region" description="Polar residues" evidence="4">
    <location>
        <begin position="248"/>
        <end position="257"/>
    </location>
</feature>
<feature type="compositionally biased region" description="Basic and acidic residues" evidence="4">
    <location>
        <begin position="295"/>
        <end position="305"/>
    </location>
</feature>
<feature type="compositionally biased region" description="Basic and acidic residues" evidence="4">
    <location>
        <begin position="316"/>
        <end position="330"/>
    </location>
</feature>
<feature type="compositionally biased region" description="Basic and acidic residues" evidence="4">
    <location>
        <begin position="411"/>
        <end position="426"/>
    </location>
</feature>
<feature type="compositionally biased region" description="Gly residues" evidence="4">
    <location>
        <begin position="428"/>
        <end position="445"/>
    </location>
</feature>
<feature type="modified residue" description="Phosphothreonine" evidence="1">
    <location>
        <position position="143"/>
    </location>
</feature>
<feature type="modified residue" description="Phosphoserine" evidence="5 9 11 12">
    <location>
        <position position="149"/>
    </location>
</feature>
<feature type="modified residue" description="Phosphoserine" evidence="5 10 12">
    <location>
        <position position="231"/>
    </location>
</feature>
<feature type="modified residue" description="Phosphoserine" evidence="1">
    <location>
        <position position="248"/>
    </location>
</feature>
<feature type="modified residue" description="Phosphoserine" evidence="1">
    <location>
        <position position="251"/>
    </location>
</feature>
<feature type="modified residue" description="Phosphoserine" evidence="1">
    <location>
        <position position="371"/>
    </location>
</feature>
<feature type="modified residue" description="N6-acetyllysine; alternate" evidence="1">
    <location>
        <position position="374"/>
    </location>
</feature>
<feature type="modified residue" description="Asymmetric dimethylarginine" evidence="1">
    <location>
        <position position="427"/>
    </location>
</feature>
<feature type="modified residue" description="Asymmetric dimethylarginine; alternate" evidence="1">
    <location>
        <position position="433"/>
    </location>
</feature>
<feature type="modified residue" description="Omega-N-methylarginine; alternate" evidence="13">
    <location>
        <position position="433"/>
    </location>
</feature>
<feature type="modified residue" description="Omega-N-methylarginine; alternate" evidence="13">
    <location>
        <position position="445"/>
    </location>
</feature>
<feature type="modified residue" description="Dimethylated arginine; alternate" evidence="1">
    <location>
        <position position="458"/>
    </location>
</feature>
<feature type="modified residue" description="Omega-N-methylarginine; alternate" evidence="13">
    <location>
        <position position="458"/>
    </location>
</feature>
<feature type="modified residue" description="Omega-N-methylarginine; alternate" evidence="1">
    <location>
        <position position="464"/>
    </location>
</feature>
<feature type="cross-link" description="Glycyl lysine isopeptide (Lys-Gly) (interchain with G-Cter in ubiquitin)" evidence="1">
    <location>
        <position position="36"/>
    </location>
</feature>
<feature type="cross-link" description="Glycyl lysine isopeptide (Lys-Gly) (interchain with G-Cter in ubiquitin)" evidence="1">
    <location>
        <position position="50"/>
    </location>
</feature>
<feature type="cross-link" description="Glycyl lysine isopeptide (Lys-Gly) (interchain with G-Cter in ubiquitin)" evidence="1">
    <location>
        <position position="59"/>
    </location>
</feature>
<feature type="cross-link" description="Glycyl lysine isopeptide (Lys-Gly) (interchain with G-Cter in ubiquitin)" evidence="1">
    <location>
        <position position="64"/>
    </location>
</feature>
<feature type="cross-link" description="Glycyl lysine isopeptide (Lys-Gly) (interchain with G-Cter in ubiquitin)" evidence="1">
    <location>
        <position position="76"/>
    </location>
</feature>
<feature type="cross-link" description="Glycyl lysine isopeptide (Lys-Gly) (interchain with G-Cter in ubiquitin)" evidence="1">
    <location>
        <position position="123"/>
    </location>
</feature>
<feature type="cross-link" description="Glycyl lysine isopeptide (Lys-Gly) (interchain with G-Cter in ubiquitin)" evidence="1">
    <location>
        <position position="351"/>
    </location>
</feature>
<feature type="cross-link" description="Glycyl lysine isopeptide (Lys-Gly) (interchain with G-Cter in ubiquitin)" evidence="1">
    <location>
        <position position="355"/>
    </location>
</feature>
<feature type="cross-link" description="Glycyl lysine isopeptide (Lys-Gly) (interchain with G-Cter in SUMO2); alternate" evidence="1">
    <location>
        <position position="374"/>
    </location>
</feature>
<feature type="cross-link" description="Glycyl lysine isopeptide (Lys-Gly) (interchain with G-Cter in ubiquitin)" evidence="1">
    <location>
        <position position="374"/>
    </location>
</feature>
<feature type="cross-link" description="Glycyl lysine isopeptide (Lys-Gly) (interchain with G-Cter in ubiquitin); alternate" evidence="1">
    <location>
        <position position="391"/>
    </location>
</feature>